<comment type="subunit">
    <text>G proteins are composed of 3 units, alpha, beta and gamma.</text>
</comment>
<comment type="subcellular location">
    <subcellularLocation>
        <location evidence="1">Membrane</location>
        <topology evidence="1">Peripheral membrane protein</topology>
    </subcellularLocation>
</comment>
<comment type="similarity">
    <text evidence="2">Belongs to the G protein gamma family.</text>
</comment>
<feature type="chain" id="PRO_0000194811" description="Guanine nucleotide-binding protein subunit gamma">
    <location>
        <begin position="1"/>
        <end position="105"/>
    </location>
</feature>
<feature type="propeptide" id="PRO_0000396774" description="Removed in mature form" evidence="1">
    <location>
        <begin position="106"/>
        <end position="108"/>
    </location>
</feature>
<feature type="modified residue" description="Cysteine methyl ester" evidence="1">
    <location>
        <position position="105"/>
    </location>
</feature>
<feature type="lipid moiety-binding region" description="S-palmitoyl cysteine" evidence="1">
    <location>
        <position position="104"/>
    </location>
</feature>
<feature type="lipid moiety-binding region" description="S-farnesyl cysteine" evidence="1">
    <location>
        <position position="105"/>
    </location>
</feature>
<accession>Q6CHP5</accession>
<reference key="1">
    <citation type="journal article" date="2004" name="Nature">
        <title>Genome evolution in yeasts.</title>
        <authorList>
            <person name="Dujon B."/>
            <person name="Sherman D."/>
            <person name="Fischer G."/>
            <person name="Durrens P."/>
            <person name="Casaregola S."/>
            <person name="Lafontaine I."/>
            <person name="de Montigny J."/>
            <person name="Marck C."/>
            <person name="Neuveglise C."/>
            <person name="Talla E."/>
            <person name="Goffard N."/>
            <person name="Frangeul L."/>
            <person name="Aigle M."/>
            <person name="Anthouard V."/>
            <person name="Babour A."/>
            <person name="Barbe V."/>
            <person name="Barnay S."/>
            <person name="Blanchin S."/>
            <person name="Beckerich J.-M."/>
            <person name="Beyne E."/>
            <person name="Bleykasten C."/>
            <person name="Boisrame A."/>
            <person name="Boyer J."/>
            <person name="Cattolico L."/>
            <person name="Confanioleri F."/>
            <person name="de Daruvar A."/>
            <person name="Despons L."/>
            <person name="Fabre E."/>
            <person name="Fairhead C."/>
            <person name="Ferry-Dumazet H."/>
            <person name="Groppi A."/>
            <person name="Hantraye F."/>
            <person name="Hennequin C."/>
            <person name="Jauniaux N."/>
            <person name="Joyet P."/>
            <person name="Kachouri R."/>
            <person name="Kerrest A."/>
            <person name="Koszul R."/>
            <person name="Lemaire M."/>
            <person name="Lesur I."/>
            <person name="Ma L."/>
            <person name="Muller H."/>
            <person name="Nicaud J.-M."/>
            <person name="Nikolski M."/>
            <person name="Oztas S."/>
            <person name="Ozier-Kalogeropoulos O."/>
            <person name="Pellenz S."/>
            <person name="Potier S."/>
            <person name="Richard G.-F."/>
            <person name="Straub M.-L."/>
            <person name="Suleau A."/>
            <person name="Swennen D."/>
            <person name="Tekaia F."/>
            <person name="Wesolowski-Louvel M."/>
            <person name="Westhof E."/>
            <person name="Wirth B."/>
            <person name="Zeniou-Meyer M."/>
            <person name="Zivanovic Y."/>
            <person name="Bolotin-Fukuhara M."/>
            <person name="Thierry A."/>
            <person name="Bouchier C."/>
            <person name="Caudron B."/>
            <person name="Scarpelli C."/>
            <person name="Gaillardin C."/>
            <person name="Weissenbach J."/>
            <person name="Wincker P."/>
            <person name="Souciet J.-L."/>
        </authorList>
    </citation>
    <scope>NUCLEOTIDE SEQUENCE [LARGE SCALE GENOMIC DNA]</scope>
    <source>
        <strain>CLIB 122 / E 150</strain>
    </source>
</reference>
<protein>
    <recommendedName>
        <fullName>Guanine nucleotide-binding protein subunit gamma</fullName>
    </recommendedName>
</protein>
<gene>
    <name type="ordered locus">YALI0A06699g</name>
</gene>
<keyword id="KW-0449">Lipoprotein</keyword>
<keyword id="KW-0472">Membrane</keyword>
<keyword id="KW-0488">Methylation</keyword>
<keyword id="KW-0564">Palmitate</keyword>
<keyword id="KW-0636">Prenylation</keyword>
<keyword id="KW-1185">Reference proteome</keyword>
<keyword id="KW-0807">Transducer</keyword>
<dbReference type="EMBL" id="CR382127">
    <property type="protein sequence ID" value="CAG83742.1"/>
    <property type="molecule type" value="Genomic_DNA"/>
</dbReference>
<dbReference type="RefSeq" id="XP_499816.1">
    <property type="nucleotide sequence ID" value="XM_499816.1"/>
</dbReference>
<dbReference type="SMR" id="Q6CHP5"/>
<dbReference type="FunCoup" id="Q6CHP5">
    <property type="interactions" value="77"/>
</dbReference>
<dbReference type="STRING" id="284591.Q6CHP5"/>
<dbReference type="EnsemblFungi" id="CAG83742">
    <property type="protein sequence ID" value="CAG83742"/>
    <property type="gene ID" value="YALI0_A06699g"/>
</dbReference>
<dbReference type="KEGG" id="yli:2905881"/>
<dbReference type="VEuPathDB" id="FungiDB:YALI0_A06699g"/>
<dbReference type="HOGENOM" id="CLU_2199040_0_0_1"/>
<dbReference type="InParanoid" id="Q6CHP5"/>
<dbReference type="OrthoDB" id="32024at4891"/>
<dbReference type="Proteomes" id="UP000001300">
    <property type="component" value="Chromosome A"/>
</dbReference>
<dbReference type="GO" id="GO:0005834">
    <property type="term" value="C:heterotrimeric G-protein complex"/>
    <property type="evidence" value="ECO:0000318"/>
    <property type="project" value="GO_Central"/>
</dbReference>
<dbReference type="GO" id="GO:0031681">
    <property type="term" value="F:G-protein beta-subunit binding"/>
    <property type="evidence" value="ECO:0007669"/>
    <property type="project" value="InterPro"/>
</dbReference>
<dbReference type="GO" id="GO:0007186">
    <property type="term" value="P:G protein-coupled receptor signaling pathway"/>
    <property type="evidence" value="ECO:0000318"/>
    <property type="project" value="GO_Central"/>
</dbReference>
<dbReference type="GO" id="GO:0000750">
    <property type="term" value="P:pheromone-dependent signal transduction involved in conjugation with cellular fusion"/>
    <property type="evidence" value="ECO:0007669"/>
    <property type="project" value="InterPro"/>
</dbReference>
<dbReference type="FunFam" id="4.10.260.10:FF:000003">
    <property type="entry name" value="G-protein complex gamma subunit Ste18/GpgA"/>
    <property type="match status" value="1"/>
</dbReference>
<dbReference type="Gene3D" id="4.10.260.10">
    <property type="entry name" value="Transducin (heterotrimeric G protein), gamma chain"/>
    <property type="match status" value="1"/>
</dbReference>
<dbReference type="InterPro" id="IPR015898">
    <property type="entry name" value="G-protein_gamma-like_dom"/>
</dbReference>
<dbReference type="InterPro" id="IPR036284">
    <property type="entry name" value="GGL_sf"/>
</dbReference>
<dbReference type="InterPro" id="IPR041848">
    <property type="entry name" value="Ste18_fungal"/>
</dbReference>
<dbReference type="PANTHER" id="PTHR28189">
    <property type="entry name" value="GUANINE NUCLEOTIDE-BINDING PROTEIN SUBUNIT GAMMA"/>
    <property type="match status" value="1"/>
</dbReference>
<dbReference type="PANTHER" id="PTHR28189:SF1">
    <property type="entry name" value="GUANINE NUCLEOTIDE-BINDING PROTEIN SUBUNIT GAMMA"/>
    <property type="match status" value="1"/>
</dbReference>
<dbReference type="Pfam" id="PF00631">
    <property type="entry name" value="G-gamma"/>
    <property type="match status" value="1"/>
</dbReference>
<dbReference type="SMART" id="SM01224">
    <property type="entry name" value="G_gamma"/>
    <property type="match status" value="1"/>
</dbReference>
<sequence>MTEDFTPNAGYIEVKPPARPRQNIAKDNQQMRLALLRVKRYETAVQRLQEEQDRERQTARQAGRDLIKYTTSVKDHAVPELWGYLPPEKNPYALYEEENKTTGCCVIS</sequence>
<evidence type="ECO:0000250" key="1"/>
<evidence type="ECO:0000305" key="2"/>
<organism>
    <name type="scientific">Yarrowia lipolytica (strain CLIB 122 / E 150)</name>
    <name type="common">Yeast</name>
    <name type="synonym">Candida lipolytica</name>
    <dbReference type="NCBI Taxonomy" id="284591"/>
    <lineage>
        <taxon>Eukaryota</taxon>
        <taxon>Fungi</taxon>
        <taxon>Dikarya</taxon>
        <taxon>Ascomycota</taxon>
        <taxon>Saccharomycotina</taxon>
        <taxon>Dipodascomycetes</taxon>
        <taxon>Dipodascales</taxon>
        <taxon>Dipodascales incertae sedis</taxon>
        <taxon>Yarrowia</taxon>
    </lineage>
</organism>
<proteinExistence type="inferred from homology"/>
<name>GBG_YARLI</name>